<name>SEPA_STAEP</name>
<dbReference type="EC" id="3.4.24.-"/>
<dbReference type="EMBL" id="X69957">
    <property type="protein sequence ID" value="CAA49579.1"/>
    <property type="molecule type" value="Genomic_DNA"/>
</dbReference>
<dbReference type="PIR" id="A40659">
    <property type="entry name" value="A40659"/>
</dbReference>
<dbReference type="SMR" id="P0C0Q3"/>
<dbReference type="MEROPS" id="M04.009"/>
<dbReference type="GO" id="GO:0005576">
    <property type="term" value="C:extracellular region"/>
    <property type="evidence" value="ECO:0007669"/>
    <property type="project" value="UniProtKB-SubCell"/>
</dbReference>
<dbReference type="GO" id="GO:0046872">
    <property type="term" value="F:metal ion binding"/>
    <property type="evidence" value="ECO:0007669"/>
    <property type="project" value="UniProtKB-KW"/>
</dbReference>
<dbReference type="GO" id="GO:0004222">
    <property type="term" value="F:metalloendopeptidase activity"/>
    <property type="evidence" value="ECO:0007669"/>
    <property type="project" value="InterPro"/>
</dbReference>
<dbReference type="GO" id="GO:0006508">
    <property type="term" value="P:proteolysis"/>
    <property type="evidence" value="ECO:0007669"/>
    <property type="project" value="UniProtKB-KW"/>
</dbReference>
<dbReference type="CDD" id="cd09597">
    <property type="entry name" value="M4_TLP"/>
    <property type="match status" value="1"/>
</dbReference>
<dbReference type="Gene3D" id="3.10.170.10">
    <property type="match status" value="1"/>
</dbReference>
<dbReference type="Gene3D" id="3.10.450.40">
    <property type="match status" value="1"/>
</dbReference>
<dbReference type="Gene3D" id="1.10.390.10">
    <property type="entry name" value="Neutral Protease Domain 2"/>
    <property type="match status" value="1"/>
</dbReference>
<dbReference type="InterPro" id="IPR011096">
    <property type="entry name" value="FTP_domain"/>
</dbReference>
<dbReference type="InterPro" id="IPR025711">
    <property type="entry name" value="PepSY"/>
</dbReference>
<dbReference type="InterPro" id="IPR023612">
    <property type="entry name" value="Peptidase_M4"/>
</dbReference>
<dbReference type="InterPro" id="IPR027268">
    <property type="entry name" value="Peptidase_M4/M1_CTD_sf"/>
</dbReference>
<dbReference type="InterPro" id="IPR001570">
    <property type="entry name" value="Peptidase_M4_C_domain"/>
</dbReference>
<dbReference type="InterPro" id="IPR013856">
    <property type="entry name" value="Peptidase_M4_domain"/>
</dbReference>
<dbReference type="InterPro" id="IPR050728">
    <property type="entry name" value="Zinc_Metalloprotease_M4"/>
</dbReference>
<dbReference type="PANTHER" id="PTHR33794">
    <property type="entry name" value="BACILLOLYSIN"/>
    <property type="match status" value="1"/>
</dbReference>
<dbReference type="PANTHER" id="PTHR33794:SF1">
    <property type="entry name" value="BACILLOLYSIN"/>
    <property type="match status" value="1"/>
</dbReference>
<dbReference type="Pfam" id="PF07504">
    <property type="entry name" value="FTP"/>
    <property type="match status" value="1"/>
</dbReference>
<dbReference type="Pfam" id="PF03413">
    <property type="entry name" value="PepSY"/>
    <property type="match status" value="1"/>
</dbReference>
<dbReference type="Pfam" id="PF01447">
    <property type="entry name" value="Peptidase_M4"/>
    <property type="match status" value="1"/>
</dbReference>
<dbReference type="Pfam" id="PF02868">
    <property type="entry name" value="Peptidase_M4_C"/>
    <property type="match status" value="1"/>
</dbReference>
<dbReference type="PRINTS" id="PR00730">
    <property type="entry name" value="THERMOLYSIN"/>
</dbReference>
<dbReference type="SUPFAM" id="SSF55486">
    <property type="entry name" value="Metalloproteases ('zincins'), catalytic domain"/>
    <property type="match status" value="1"/>
</dbReference>
<dbReference type="PROSITE" id="PS00142">
    <property type="entry name" value="ZINC_PROTEASE"/>
    <property type="match status" value="1"/>
</dbReference>
<organism>
    <name type="scientific">Staphylococcus epidermidis</name>
    <dbReference type="NCBI Taxonomy" id="1282"/>
    <lineage>
        <taxon>Bacteria</taxon>
        <taxon>Bacillati</taxon>
        <taxon>Bacillota</taxon>
        <taxon>Bacilli</taxon>
        <taxon>Bacillales</taxon>
        <taxon>Staphylococcaceae</taxon>
        <taxon>Staphylococcus</taxon>
    </lineage>
</organism>
<evidence type="ECO:0000250" key="1"/>
<evidence type="ECO:0000255" key="2"/>
<evidence type="ECO:0000255" key="3">
    <source>
        <dbReference type="PROSITE-ProRule" id="PRU10095"/>
    </source>
</evidence>
<evidence type="ECO:0000269" key="4">
    <source>
    </source>
</evidence>
<evidence type="ECO:0000305" key="5"/>
<gene>
    <name type="primary">sepA</name>
</gene>
<keyword id="KW-0106">Calcium</keyword>
<keyword id="KW-0903">Direct protein sequencing</keyword>
<keyword id="KW-0378">Hydrolase</keyword>
<keyword id="KW-0479">Metal-binding</keyword>
<keyword id="KW-0482">Metalloprotease</keyword>
<keyword id="KW-0645">Protease</keyword>
<keyword id="KW-0964">Secreted</keyword>
<keyword id="KW-0732">Signal</keyword>
<keyword id="KW-0862">Zinc</keyword>
<keyword id="KW-0865">Zymogen</keyword>
<protein>
    <recommendedName>
        <fullName>Extracellular elastase</fullName>
        <ecNumber>3.4.24.-</ecNumber>
    </recommendedName>
    <alternativeName>
        <fullName>SEPP1</fullName>
    </alternativeName>
</protein>
<reference key="1">
    <citation type="journal article" date="1993" name="J. Bacteriol.">
        <title>Characterization of an extracellular metalloprotease with elastase activity from Staphylococcus epidermidis.</title>
        <authorList>
            <person name="Teufel P."/>
        </authorList>
    </citation>
    <scope>NUCLEOTIDE SEQUENCE [GENOMIC DNA]</scope>
    <scope>PROTEIN SEQUENCE OF 208-222</scope>
    <source>
        <strain>TU 3298 / DSM 3095</strain>
    </source>
</reference>
<accession>P0C0Q3</accession>
<accession>P43148</accession>
<feature type="signal peptide" evidence="2">
    <location>
        <begin position="1"/>
        <end position="28"/>
    </location>
</feature>
<feature type="propeptide" id="PRO_0000028620" evidence="4">
    <location>
        <begin position="29"/>
        <end position="207"/>
    </location>
</feature>
<feature type="chain" id="PRO_0000028621" description="Extracellular elastase">
    <location>
        <begin position="208"/>
        <end position="507"/>
    </location>
</feature>
<feature type="active site" evidence="3">
    <location>
        <position position="352"/>
    </location>
</feature>
<feature type="active site" description="Proton donor" evidence="3">
    <location>
        <position position="435"/>
    </location>
</feature>
<feature type="binding site" evidence="1">
    <location>
        <position position="347"/>
    </location>
    <ligand>
        <name>Ca(2+)</name>
        <dbReference type="ChEBI" id="CHEBI:29108"/>
        <label>1</label>
    </ligand>
</feature>
<feature type="binding site" evidence="3">
    <location>
        <position position="351"/>
    </location>
    <ligand>
        <name>Zn(2+)</name>
        <dbReference type="ChEBI" id="CHEBI:29105"/>
        <note>catalytic</note>
    </ligand>
</feature>
<feature type="binding site" evidence="3">
    <location>
        <position position="355"/>
    </location>
    <ligand>
        <name>Zn(2+)</name>
        <dbReference type="ChEBI" id="CHEBI:29105"/>
        <note>catalytic</note>
    </ligand>
</feature>
<feature type="binding site" evidence="3">
    <location>
        <position position="375"/>
    </location>
    <ligand>
        <name>Zn(2+)</name>
        <dbReference type="ChEBI" id="CHEBI:29105"/>
        <note>catalytic</note>
    </ligand>
</feature>
<feature type="binding site" evidence="1">
    <location>
        <position position="386"/>
    </location>
    <ligand>
        <name>Ca(2+)</name>
        <dbReference type="ChEBI" id="CHEBI:29108"/>
        <label>1</label>
    </ligand>
</feature>
<feature type="binding site" evidence="1">
    <location>
        <position position="386"/>
    </location>
    <ligand>
        <name>Ca(2+)</name>
        <dbReference type="ChEBI" id="CHEBI:29108"/>
        <label>2</label>
    </ligand>
</feature>
<feature type="binding site" evidence="1">
    <location>
        <position position="388"/>
    </location>
    <ligand>
        <name>Ca(2+)</name>
        <dbReference type="ChEBI" id="CHEBI:29108"/>
        <label>2</label>
    </ligand>
</feature>
<feature type="binding site" evidence="1">
    <location>
        <position position="389"/>
    </location>
    <ligand>
        <name>Ca(2+)</name>
        <dbReference type="ChEBI" id="CHEBI:29108"/>
        <label>1</label>
    </ligand>
</feature>
<feature type="binding site" evidence="1">
    <location>
        <position position="389"/>
    </location>
    <ligand>
        <name>Ca(2+)</name>
        <dbReference type="ChEBI" id="CHEBI:29108"/>
        <label>2</label>
    </ligand>
</feature>
<feature type="binding site" evidence="1">
    <location>
        <position position="391"/>
    </location>
    <ligand>
        <name>Ca(2+)</name>
        <dbReference type="ChEBI" id="CHEBI:29108"/>
        <label>1</label>
    </ligand>
</feature>
<feature type="binding site" evidence="1">
    <location>
        <position position="394"/>
    </location>
    <ligand>
        <name>Ca(2+)</name>
        <dbReference type="ChEBI" id="CHEBI:29108"/>
        <label>1</label>
    </ligand>
</feature>
<feature type="binding site" evidence="1">
    <location>
        <position position="394"/>
    </location>
    <ligand>
        <name>Ca(2+)</name>
        <dbReference type="ChEBI" id="CHEBI:29108"/>
        <label>2</label>
    </ligand>
</feature>
<feature type="binding site" evidence="1">
    <location>
        <position position="397"/>
    </location>
    <ligand>
        <name>Ca(2+)</name>
        <dbReference type="ChEBI" id="CHEBI:29108"/>
        <label>3</label>
    </ligand>
</feature>
<feature type="binding site" evidence="1">
    <location>
        <position position="398"/>
    </location>
    <ligand>
        <name>Ca(2+)</name>
        <dbReference type="ChEBI" id="CHEBI:29108"/>
        <label>3</label>
    </ligand>
</feature>
<feature type="binding site" evidence="1">
    <location>
        <position position="401"/>
    </location>
    <ligand>
        <name>Ca(2+)</name>
        <dbReference type="ChEBI" id="CHEBI:29108"/>
        <label>3</label>
    </ligand>
</feature>
<feature type="binding site" evidence="1">
    <location>
        <position position="404"/>
    </location>
    <ligand>
        <name>Ca(2+)</name>
        <dbReference type="ChEBI" id="CHEBI:29108"/>
        <label>3</label>
    </ligand>
</feature>
<sequence>MKNFSKFALTSIAALTVASPLVNTEVDAKDKVSATQNIDAKVTQESQATDALKELPKSENIKKHYKDYKVTDTEKDNKGFTHYTLQPKVGNTYAPDKEVKVHTNKEGKVVLVNGDTDAKKVQPTNKVSISKESATDKAFEAIKIDRQKAKNLKSDVIKTNKVEIDGEKNKYVYNIEIITTSPKISHWNVKIDAETGQVVDKLNMIKEAATTGTGKGVLGDTKQININSVSGGYALQDLTQQGTLSAYNYDANTGQAYLMQDKDRNFDDDEQRAGVDANYYAKETYDYYKNTFGRESYDNQGSPIISLAHVNNFQGQDNRNNAAWIGDKMIYGDGDGRTFTALSGANDVVAHEITHGVTQQTANLVYRSQSGALNESFSDVFGYFVDDEDFLMGEDVYTPGVGGDALRSMSNPERFGQPSHMNDFVYTNSDNGGVHTNSGIPNKAAYNTIRSIGKQRSEQIYYRALTVYLTSNSDFQDAKASLQQAALDLYGEGIAQQVGQAWDSVGV</sequence>
<proteinExistence type="evidence at protein level"/>
<comment type="function">
    <text>Protease that has a low substrate specificity. Glucagon is preferentially cleaved between aromatic (Phe) and hydrophobic (Val) amino acids. Hydrolyzes casein and elastin.</text>
</comment>
<comment type="cofactor">
    <cofactor evidence="1">
        <name>Ca(2+)</name>
        <dbReference type="ChEBI" id="CHEBI:29108"/>
    </cofactor>
    <text evidence="1">Binds 3 Ca(2+) ions per subunit.</text>
</comment>
<comment type="cofactor">
    <cofactor evidence="1">
        <name>Zn(2+)</name>
        <dbReference type="ChEBI" id="CHEBI:29105"/>
    </cofactor>
    <text evidence="1">Binds 1 zinc ion per subunit.</text>
</comment>
<comment type="biophysicochemical properties">
    <phDependence>
        <text>Optimum pH is 5-7.</text>
    </phDependence>
</comment>
<comment type="subcellular location">
    <subcellularLocation>
        <location>Secreted</location>
    </subcellularLocation>
</comment>
<comment type="similarity">
    <text evidence="5">Belongs to the peptidase M4 family.</text>
</comment>